<sequence>MTSSKPKKSSRVRKTSKNSKKNNKIIMPTLAKTPPSFKNKVVDKKALKNLVSWAYKTHGTAVTAAMADNLKDLGFKYATQAAVSISVEDLKVPEAKQDLIGQAEAQITSTEECYRLGEITEVERHTKVIDTWTETNERLVDAVKNNFNQNDPLNSVWMMANSGARGNMSQVRQLVGMRGLMANPQGEIIDLPIRTNFREGLTVTEYVISSYGARKGLVDTALRTADSGYLTRRLVDVAQDVIVREEDCGTERSIVIEAEDGKFGSRLIGRLSAEDVLDSEDNLIIPKNTAIDPSLSKTIETSLISTVNIRSPLTCEANRSVCRKCYGWALAHNHLVDLGEAVGIIAAQSIGEPGTQLTMRTFHTGGVSTAESGVVRSKIKGKVEFSSKAKIRGYRTPHGVEAKQAEVDFLLKIIPSGNNSNKAQKIEVTSGSLLFVDDGQEIDSDITVAQITSGAVKKSVEKATKDVICDLAGQVRYDKVLQPKEVTDRQGNITLKAQRLGRLWVLAGDVYNLPPNAKPVISTEKNVEQGTVLAEASQYSEFGGEVRLRESVGDSREVQIVTTSMLLSNFNLIEESTHSGEIFHLESNDGTIYRLNTSPGSKISSGEVIADLADERFRTKTGGLVKYAPGLSVKKARSSKNGFEVSQGGTLLWIPQETHEINKDISLLMTEDMAWIEAGTEVVKDIFSQTSGIVTVTQKNDILREITVRNGSFHECEDEEVLNRFTEEGQLVNPGEKIIDGVDNNEILFVQKLETSKSKGLLLRTVEEFNIPDEAELPELTHVKQEKGPSLGLKAIQRLSYKDGELIKSVEGVELLKTHLSLESFDATPQMTIDVETIKDKSNDSINRLNLVILESILVRRDTISDSSHGSTHTELQVKNNQQVKAGDVIATTQILCKEKGIVQLPDLVENEPIRRLIVEREEDKIKINITGKALVKVGDRVVDGDSISEGEKATSCGEIEEVSSKCVTLRLGRPYMVSPDSVLHVKDGDLVLRGDGLALLVFERQKTGDIVQGLPRIEELLEARRPRDSSTLCKRSGVVQIKEGNDDESVSLSVIERDDSINEYQLLIGQNIMVSDGQQVKGGELLTDGPINPHELLDCLFTDIKDQKPLMDAARESISKLQRRMVNEVQNVYKSQGVAIDDKHIEVIVRQMTSKVRIEDAGDTTLLPGELIELRQVEDTNQAMSITGGAPAEFTPVLLGITKASLNTDSFISAASFQETTRVLTEAAIEGKSDWLRGLKENVIIGRLIPAGTGFSGFVEELASEAGPHPDILAEESGGYRRAQNLRPDYTVDMPQSPTVSSTAILDDPSDEDLETTRNRHGIDPSSSNFAAFARPNAENQFSEDQLPDPAALEGLQEEGLLSDE</sequence>
<evidence type="ECO:0000255" key="1">
    <source>
        <dbReference type="HAMAP-Rule" id="MF_01324"/>
    </source>
</evidence>
<evidence type="ECO:0000256" key="2">
    <source>
        <dbReference type="SAM" id="MobiDB-lite"/>
    </source>
</evidence>
<reference key="1">
    <citation type="journal article" date="2007" name="PLoS Genet.">
        <title>Patterns and implications of gene gain and loss in the evolution of Prochlorococcus.</title>
        <authorList>
            <person name="Kettler G.C."/>
            <person name="Martiny A.C."/>
            <person name="Huang K."/>
            <person name="Zucker J."/>
            <person name="Coleman M.L."/>
            <person name="Rodrigue S."/>
            <person name="Chen F."/>
            <person name="Lapidus A."/>
            <person name="Ferriera S."/>
            <person name="Johnson J."/>
            <person name="Steglich C."/>
            <person name="Church G.M."/>
            <person name="Richardson P."/>
            <person name="Chisholm S.W."/>
        </authorList>
    </citation>
    <scope>NUCLEOTIDE SEQUENCE [LARGE SCALE GENOMIC DNA]</scope>
    <source>
        <strain>MIT 9515</strain>
    </source>
</reference>
<accession>A2BYK9</accession>
<feature type="chain" id="PRO_0000353530" description="DNA-directed RNA polymerase subunit beta'">
    <location>
        <begin position="1"/>
        <end position="1366"/>
    </location>
</feature>
<feature type="region of interest" description="Disordered" evidence="2">
    <location>
        <begin position="1"/>
        <end position="25"/>
    </location>
</feature>
<feature type="region of interest" description="Disordered" evidence="2">
    <location>
        <begin position="1290"/>
        <end position="1366"/>
    </location>
</feature>
<feature type="compositionally biased region" description="Basic residues" evidence="2">
    <location>
        <begin position="1"/>
        <end position="23"/>
    </location>
</feature>
<feature type="compositionally biased region" description="Polar residues" evidence="2">
    <location>
        <begin position="1295"/>
        <end position="1305"/>
    </location>
</feature>
<feature type="compositionally biased region" description="Low complexity" evidence="2">
    <location>
        <begin position="1354"/>
        <end position="1366"/>
    </location>
</feature>
<feature type="binding site" evidence="1">
    <location>
        <position position="248"/>
    </location>
    <ligand>
        <name>Zn(2+)</name>
        <dbReference type="ChEBI" id="CHEBI:29105"/>
    </ligand>
</feature>
<feature type="binding site" evidence="1">
    <location>
        <position position="315"/>
    </location>
    <ligand>
        <name>Zn(2+)</name>
        <dbReference type="ChEBI" id="CHEBI:29105"/>
    </ligand>
</feature>
<feature type="binding site" evidence="1">
    <location>
        <position position="322"/>
    </location>
    <ligand>
        <name>Zn(2+)</name>
        <dbReference type="ChEBI" id="CHEBI:29105"/>
    </ligand>
</feature>
<feature type="binding site" evidence="1">
    <location>
        <position position="325"/>
    </location>
    <ligand>
        <name>Zn(2+)</name>
        <dbReference type="ChEBI" id="CHEBI:29105"/>
    </ligand>
</feature>
<organism>
    <name type="scientific">Prochlorococcus marinus (strain MIT 9515)</name>
    <dbReference type="NCBI Taxonomy" id="167542"/>
    <lineage>
        <taxon>Bacteria</taxon>
        <taxon>Bacillati</taxon>
        <taxon>Cyanobacteriota</taxon>
        <taxon>Cyanophyceae</taxon>
        <taxon>Synechococcales</taxon>
        <taxon>Prochlorococcaceae</taxon>
        <taxon>Prochlorococcus</taxon>
    </lineage>
</organism>
<dbReference type="EC" id="2.7.7.6" evidence="1"/>
<dbReference type="EMBL" id="CP000552">
    <property type="protein sequence ID" value="ABM72870.1"/>
    <property type="molecule type" value="Genomic_DNA"/>
</dbReference>
<dbReference type="RefSeq" id="WP_011820963.1">
    <property type="nucleotide sequence ID" value="NC_008817.1"/>
</dbReference>
<dbReference type="SMR" id="A2BYK9"/>
<dbReference type="STRING" id="167542.P9515_16631"/>
<dbReference type="GeneID" id="60200713"/>
<dbReference type="KEGG" id="pmc:P9515_16631"/>
<dbReference type="eggNOG" id="COG0086">
    <property type="taxonomic scope" value="Bacteria"/>
</dbReference>
<dbReference type="HOGENOM" id="CLU_000524_1_0_3"/>
<dbReference type="OrthoDB" id="9815296at2"/>
<dbReference type="Proteomes" id="UP000001589">
    <property type="component" value="Chromosome"/>
</dbReference>
<dbReference type="GO" id="GO:0000428">
    <property type="term" value="C:DNA-directed RNA polymerase complex"/>
    <property type="evidence" value="ECO:0007669"/>
    <property type="project" value="UniProtKB-KW"/>
</dbReference>
<dbReference type="GO" id="GO:0003677">
    <property type="term" value="F:DNA binding"/>
    <property type="evidence" value="ECO:0007669"/>
    <property type="project" value="UniProtKB-UniRule"/>
</dbReference>
<dbReference type="GO" id="GO:0003899">
    <property type="term" value="F:DNA-directed RNA polymerase activity"/>
    <property type="evidence" value="ECO:0007669"/>
    <property type="project" value="UniProtKB-UniRule"/>
</dbReference>
<dbReference type="GO" id="GO:0008270">
    <property type="term" value="F:zinc ion binding"/>
    <property type="evidence" value="ECO:0007669"/>
    <property type="project" value="UniProtKB-UniRule"/>
</dbReference>
<dbReference type="GO" id="GO:0006351">
    <property type="term" value="P:DNA-templated transcription"/>
    <property type="evidence" value="ECO:0007669"/>
    <property type="project" value="UniProtKB-UniRule"/>
</dbReference>
<dbReference type="CDD" id="cd02655">
    <property type="entry name" value="RNAP_beta'_C"/>
    <property type="match status" value="1"/>
</dbReference>
<dbReference type="FunFam" id="1.10.150.390:FF:000002">
    <property type="entry name" value="DNA-directed RNA polymerase subunit beta"/>
    <property type="match status" value="1"/>
</dbReference>
<dbReference type="Gene3D" id="1.10.132.30">
    <property type="match status" value="1"/>
</dbReference>
<dbReference type="Gene3D" id="1.10.150.390">
    <property type="match status" value="1"/>
</dbReference>
<dbReference type="Gene3D" id="1.10.1790.20">
    <property type="match status" value="1"/>
</dbReference>
<dbReference type="Gene3D" id="2.40.50.100">
    <property type="match status" value="1"/>
</dbReference>
<dbReference type="Gene3D" id="1.10.274.100">
    <property type="entry name" value="RNA polymerase Rpb1, domain 3"/>
    <property type="match status" value="1"/>
</dbReference>
<dbReference type="HAMAP" id="MF_01324">
    <property type="entry name" value="RNApol_bact_RpoC2"/>
    <property type="match status" value="1"/>
</dbReference>
<dbReference type="InterPro" id="IPR012756">
    <property type="entry name" value="DNA-dir_RpoC2_beta_pp"/>
</dbReference>
<dbReference type="InterPro" id="IPR045867">
    <property type="entry name" value="DNA-dir_RpoC_beta_prime"/>
</dbReference>
<dbReference type="InterPro" id="IPR007066">
    <property type="entry name" value="RNA_pol_Rpb1_3"/>
</dbReference>
<dbReference type="InterPro" id="IPR042102">
    <property type="entry name" value="RNA_pol_Rpb1_3_sf"/>
</dbReference>
<dbReference type="InterPro" id="IPR007083">
    <property type="entry name" value="RNA_pol_Rpb1_4"/>
</dbReference>
<dbReference type="InterPro" id="IPR007081">
    <property type="entry name" value="RNA_pol_Rpb1_5"/>
</dbReference>
<dbReference type="InterPro" id="IPR038120">
    <property type="entry name" value="Rpb1_funnel_sf"/>
</dbReference>
<dbReference type="NCBIfam" id="NF002724">
    <property type="entry name" value="PRK02597.1"/>
    <property type="match status" value="1"/>
</dbReference>
<dbReference type="NCBIfam" id="TIGR02388">
    <property type="entry name" value="rpoC2_cyan"/>
    <property type="match status" value="1"/>
</dbReference>
<dbReference type="PANTHER" id="PTHR19376">
    <property type="entry name" value="DNA-DIRECTED RNA POLYMERASE"/>
    <property type="match status" value="1"/>
</dbReference>
<dbReference type="PANTHER" id="PTHR19376:SF63">
    <property type="entry name" value="DNA-DIRECTED RNA POLYMERASE SUBUNIT BETA"/>
    <property type="match status" value="1"/>
</dbReference>
<dbReference type="Pfam" id="PF04983">
    <property type="entry name" value="RNA_pol_Rpb1_3"/>
    <property type="match status" value="1"/>
</dbReference>
<dbReference type="Pfam" id="PF05000">
    <property type="entry name" value="RNA_pol_Rpb1_4"/>
    <property type="match status" value="1"/>
</dbReference>
<dbReference type="Pfam" id="PF04998">
    <property type="entry name" value="RNA_pol_Rpb1_5"/>
    <property type="match status" value="1"/>
</dbReference>
<dbReference type="SUPFAM" id="SSF64484">
    <property type="entry name" value="beta and beta-prime subunits of DNA dependent RNA-polymerase"/>
    <property type="match status" value="1"/>
</dbReference>
<name>RPOC2_PROM5</name>
<comment type="function">
    <text evidence="1">DNA-dependent RNA polymerase catalyzes the transcription of DNA into RNA using the four ribonucleoside triphosphates as substrates.</text>
</comment>
<comment type="catalytic activity">
    <reaction evidence="1">
        <text>RNA(n) + a ribonucleoside 5'-triphosphate = RNA(n+1) + diphosphate</text>
        <dbReference type="Rhea" id="RHEA:21248"/>
        <dbReference type="Rhea" id="RHEA-COMP:14527"/>
        <dbReference type="Rhea" id="RHEA-COMP:17342"/>
        <dbReference type="ChEBI" id="CHEBI:33019"/>
        <dbReference type="ChEBI" id="CHEBI:61557"/>
        <dbReference type="ChEBI" id="CHEBI:140395"/>
        <dbReference type="EC" id="2.7.7.6"/>
    </reaction>
</comment>
<comment type="cofactor">
    <cofactor evidence="1">
        <name>Zn(2+)</name>
        <dbReference type="ChEBI" id="CHEBI:29105"/>
    </cofactor>
    <text evidence="1">Binds 1 Zn(2+) ion per subunit.</text>
</comment>
<comment type="subunit">
    <text evidence="1">In cyanobacteria the RNAP catalytic core is composed of 2 alpha, 1 beta, 1 beta', 1 gamma and 1 omega subunit. When a sigma factor is associated with the core the holoenzyme is formed, which can initiate transcription.</text>
</comment>
<comment type="similarity">
    <text evidence="1">Belongs to the RNA polymerase beta' chain family. RpoC2 subfamily.</text>
</comment>
<keyword id="KW-0240">DNA-directed RNA polymerase</keyword>
<keyword id="KW-0479">Metal-binding</keyword>
<keyword id="KW-0548">Nucleotidyltransferase</keyword>
<keyword id="KW-0804">Transcription</keyword>
<keyword id="KW-0808">Transferase</keyword>
<keyword id="KW-0862">Zinc</keyword>
<protein>
    <recommendedName>
        <fullName evidence="1">DNA-directed RNA polymerase subunit beta'</fullName>
        <shortName evidence="1">RNAP subunit beta'</shortName>
        <ecNumber evidence="1">2.7.7.6</ecNumber>
    </recommendedName>
    <alternativeName>
        <fullName evidence="1">RNA polymerase subunit beta'</fullName>
    </alternativeName>
    <alternativeName>
        <fullName evidence="1">Transcriptase subunit beta'</fullName>
    </alternativeName>
</protein>
<gene>
    <name evidence="1" type="primary">rpoC2</name>
    <name type="ordered locus">P9515_16631</name>
</gene>
<proteinExistence type="inferred from homology"/>